<proteinExistence type="evidence at protein level"/>
<feature type="signal peptide" evidence="5">
    <location>
        <begin position="1"/>
        <end position="23"/>
    </location>
</feature>
<feature type="chain" id="PRO_0000030972" description="Ribonuclease-like storage protein">
    <location>
        <begin position="24"/>
        <end position="238"/>
    </location>
</feature>
<feature type="active site" description="Proton donor" evidence="3 4">
    <location>
        <position position="61"/>
    </location>
</feature>
<feature type="active site" evidence="1">
    <location>
        <position position="113"/>
    </location>
</feature>
<feature type="active site" description="Proton acceptor" evidence="3 4">
    <location>
        <position position="117"/>
    </location>
</feature>
<feature type="binding site" evidence="2">
    <location>
        <position position="37"/>
    </location>
    <ligand>
        <name>RNA</name>
        <dbReference type="ChEBI" id="CHEBI:33697"/>
    </ligand>
    <ligandPart>
        <name>a 3'-terminal ribonucleotide 3'-phosphate residue</name>
        <dbReference type="ChEBI" id="CHEBI:83062"/>
    </ligandPart>
</feature>
<feature type="binding site" evidence="2">
    <location>
        <position position="61"/>
    </location>
    <ligand>
        <name>RNA</name>
        <dbReference type="ChEBI" id="CHEBI:33697"/>
    </ligand>
    <ligandPart>
        <name>a 3'-terminal ribonucleotide 3'-phosphate residue</name>
        <dbReference type="ChEBI" id="CHEBI:83062"/>
    </ligandPart>
</feature>
<feature type="binding site" evidence="2">
    <location>
        <position position="109"/>
    </location>
    <ligand>
        <name>RNA</name>
        <dbReference type="ChEBI" id="CHEBI:33697"/>
    </ligand>
    <ligandPart>
        <name>a 3'-terminal ribonucleotide 3'-phosphate residue</name>
        <dbReference type="ChEBI" id="CHEBI:83062"/>
    </ligandPart>
</feature>
<feature type="binding site" evidence="2">
    <location>
        <begin position="112"/>
        <end position="113"/>
    </location>
    <ligand>
        <name>RNA</name>
        <dbReference type="ChEBI" id="CHEBI:33697"/>
    </ligand>
    <ligandPart>
        <name>a 3'-terminal ribonucleotide 3'-phosphate residue</name>
        <dbReference type="ChEBI" id="CHEBI:83062"/>
    </ligandPart>
</feature>
<feature type="binding site" evidence="2">
    <location>
        <begin position="116"/>
        <end position="117"/>
    </location>
    <ligand>
        <name>RNA</name>
        <dbReference type="ChEBI" id="CHEBI:33697"/>
    </ligand>
    <ligandPart>
        <name>a 3'-terminal ribonucleotide 3'-phosphate residue</name>
        <dbReference type="ChEBI" id="CHEBI:83062"/>
    </ligandPart>
</feature>
<feature type="disulfide bond" evidence="3">
    <location>
        <begin position="43"/>
        <end position="49"/>
    </location>
</feature>
<feature type="disulfide bond" evidence="1">
    <location>
        <begin position="76"/>
        <end position="120"/>
    </location>
</feature>
<feature type="disulfide bond" evidence="2">
    <location>
        <begin position="196"/>
        <end position="207"/>
    </location>
</feature>
<feature type="sequence conflict" description="In Ref. 2; AA sequence." evidence="8" ref="2">
    <location>
        <position position="25"/>
    </location>
</feature>
<feature type="sequence conflict" description="In Ref. 2; AA sequence." evidence="8" ref="2">
    <original>W</original>
    <variation>A</variation>
    <location>
        <position position="29"/>
    </location>
</feature>
<feature type="sequence conflict" description="In Ref. 3; AA sequence." evidence="8" ref="3">
    <original>W</original>
    <variation>K</variation>
    <location>
        <position position="29"/>
    </location>
</feature>
<feature type="sequence conflict" description="In Ref. 3; AA sequence." evidence="8" ref="3">
    <original>L</original>
    <variation>K</variation>
    <location>
        <position position="34"/>
    </location>
</feature>
<feature type="sequence conflict" description="In Ref. 2; AA sequence." evidence="8" ref="2">
    <original>L</original>
    <variation>Q</variation>
    <location>
        <position position="36"/>
    </location>
</feature>
<organism>
    <name type="scientific">Panax ginseng</name>
    <name type="common">Korean ginseng</name>
    <dbReference type="NCBI Taxonomy" id="4054"/>
    <lineage>
        <taxon>Eukaryota</taxon>
        <taxon>Viridiplantae</taxon>
        <taxon>Streptophyta</taxon>
        <taxon>Embryophyta</taxon>
        <taxon>Tracheophyta</taxon>
        <taxon>Spermatophyta</taxon>
        <taxon>Magnoliopsida</taxon>
        <taxon>eudicotyledons</taxon>
        <taxon>Gunneridae</taxon>
        <taxon>Pentapetalae</taxon>
        <taxon>asterids</taxon>
        <taxon>campanulids</taxon>
        <taxon>Apiales</taxon>
        <taxon>Araliaceae</taxon>
        <taxon>Panax</taxon>
    </lineage>
</organism>
<name>RN28_PANGI</name>
<protein>
    <recommendedName>
        <fullName>Ribonuclease-like storage protein</fullName>
    </recommendedName>
    <alternativeName>
        <fullName>Root 28 kDa major protein</fullName>
    </alternativeName>
</protein>
<reference key="1">
    <citation type="journal article" date="2004" name="J. Plant Physiol.">
        <title>Characterization of RNase-like major storage protein from the ginseng root by proteomic approach.</title>
        <authorList>
            <person name="Kim S.I."/>
            <person name="Kweon S.M."/>
            <person name="Kim E.A."/>
            <person name="Kim J.Y."/>
            <person name="Kim S."/>
            <person name="Yoo J.S."/>
            <person name="Park Y.M."/>
        </authorList>
    </citation>
    <scope>NUCLEOTIDE SEQUENCE [MRNA]</scope>
    <scope>FUNCTION</scope>
    <source>
        <tissue>Root</tissue>
    </source>
</reference>
<reference evidence="8" key="2">
    <citation type="journal article" date="2002" name="Comp. Biochem. Physiol.">
        <title>Purification and characterization of a 28-kDa major protein from ginseng root.</title>
        <authorList>
            <person name="Yoon J.Y."/>
            <person name="Ha B.H."/>
            <person name="Woo J.S."/>
            <person name="Lim Y.H."/>
            <person name="Kim K.H."/>
        </authorList>
    </citation>
    <scope>PROTEIN SEQUENCE OF 24-39</scope>
    <scope>FUNCTION</scope>
    <source>
        <tissue evidence="5">Root</tissue>
    </source>
</reference>
<reference key="3">
    <citation type="journal article" date="2002" name="Proteomics">
        <title>Proteome of oriental ginseng Panax ginseng C. A. Meyer and the potential to use it as an identification tool.</title>
        <authorList>
            <person name="Lum J.H.-K."/>
            <person name="Fung K.-L."/>
            <person name="Cheung P.-Y."/>
            <person name="Wong M.-S."/>
            <person name="Lee C.-H."/>
            <person name="Kwok F.S.-L."/>
            <person name="Leung M.C.-P."/>
            <person name="Hui P.-K."/>
            <person name="Lo S.C.-L."/>
        </authorList>
    </citation>
    <scope>PROTEIN SEQUENCE OF 25-40</scope>
    <source>
        <tissue>Root</tissue>
    </source>
</reference>
<sequence>MRAIYIISVIIVSLSIFSWGGNARSDYPWAMFALRLQWPAGFCEVNNACDTKSLLNTFTIHGLYPYNAKGTPALYCDGTAFDVNSVSDFLAEMHLAWPSHETNTEDIQFWEHEWKKHGRCSEALLKQTDYFRTALAFRKAFDIVGLLNQEGIYPNNDLYRPKMIKEAIKKHLNAVPEIDFTKNENSEYVLTDINVCVNQQATRFVDCPTDDATDDYRLKFVRLPSKMKFADPRTNSII</sequence>
<evidence type="ECO:0000250" key="1">
    <source>
        <dbReference type="UniProtKB" id="P08056"/>
    </source>
</evidence>
<evidence type="ECO:0000250" key="2">
    <source>
        <dbReference type="UniProtKB" id="P23540"/>
    </source>
</evidence>
<evidence type="ECO:0000250" key="3">
    <source>
        <dbReference type="UniProtKB" id="Q7SID5"/>
    </source>
</evidence>
<evidence type="ECO:0000255" key="4">
    <source>
        <dbReference type="PROSITE-ProRule" id="PRU10045"/>
    </source>
</evidence>
<evidence type="ECO:0000269" key="5">
    <source>
    </source>
</evidence>
<evidence type="ECO:0000269" key="6">
    <source>
    </source>
</evidence>
<evidence type="ECO:0000303" key="7">
    <source>
    </source>
</evidence>
<evidence type="ECO:0000305" key="8"/>
<comment type="function">
    <text evidence="5 6">May act as a storage protein providing a nitrogen source. Seems to have no RNase activity although it has conserved the active site residues.</text>
</comment>
<comment type="subunit">
    <text evidence="7 8">Homodimer.</text>
</comment>
<comment type="tissue specificity">
    <text>Root.</text>
</comment>
<comment type="similarity">
    <text evidence="8">Belongs to the RNase T2 family.</text>
</comment>
<dbReference type="EMBL" id="AY496964">
    <property type="protein sequence ID" value="AAR88098.1"/>
    <property type="molecule type" value="mRNA"/>
</dbReference>
<dbReference type="SMR" id="P83618"/>
<dbReference type="GO" id="GO:0045735">
    <property type="term" value="F:nutrient reservoir activity"/>
    <property type="evidence" value="ECO:0007669"/>
    <property type="project" value="UniProtKB-KW"/>
</dbReference>
<dbReference type="GO" id="GO:0033897">
    <property type="term" value="F:ribonuclease T2 activity"/>
    <property type="evidence" value="ECO:0007669"/>
    <property type="project" value="InterPro"/>
</dbReference>
<dbReference type="GO" id="GO:0003723">
    <property type="term" value="F:RNA binding"/>
    <property type="evidence" value="ECO:0007669"/>
    <property type="project" value="InterPro"/>
</dbReference>
<dbReference type="GO" id="GO:0006401">
    <property type="term" value="P:RNA catabolic process"/>
    <property type="evidence" value="ECO:0007669"/>
    <property type="project" value="UniProtKB-ARBA"/>
</dbReference>
<dbReference type="CDD" id="cd01061">
    <property type="entry name" value="RNase_T2_euk"/>
    <property type="match status" value="1"/>
</dbReference>
<dbReference type="Gene3D" id="3.90.730.10">
    <property type="entry name" value="Ribonuclease T2-like"/>
    <property type="match status" value="1"/>
</dbReference>
<dbReference type="InterPro" id="IPR033697">
    <property type="entry name" value="Ribonuclease_T2_eukaryotic"/>
</dbReference>
<dbReference type="InterPro" id="IPR001568">
    <property type="entry name" value="RNase_T2-like"/>
</dbReference>
<dbReference type="InterPro" id="IPR036430">
    <property type="entry name" value="RNase_T2-like_sf"/>
</dbReference>
<dbReference type="InterPro" id="IPR018188">
    <property type="entry name" value="RNase_T2_His_AS_1"/>
</dbReference>
<dbReference type="InterPro" id="IPR033130">
    <property type="entry name" value="RNase_T2_His_AS_2"/>
</dbReference>
<dbReference type="PANTHER" id="PTHR11240">
    <property type="entry name" value="RIBONUCLEASE T2"/>
    <property type="match status" value="1"/>
</dbReference>
<dbReference type="PANTHER" id="PTHR11240:SF22">
    <property type="entry name" value="RIBONUCLEASE T2"/>
    <property type="match status" value="1"/>
</dbReference>
<dbReference type="Pfam" id="PF00445">
    <property type="entry name" value="Ribonuclease_T2"/>
    <property type="match status" value="1"/>
</dbReference>
<dbReference type="SUPFAM" id="SSF55895">
    <property type="entry name" value="Ribonuclease Rh-like"/>
    <property type="match status" value="1"/>
</dbReference>
<dbReference type="PROSITE" id="PS00530">
    <property type="entry name" value="RNASE_T2_1"/>
    <property type="match status" value="1"/>
</dbReference>
<dbReference type="PROSITE" id="PS00531">
    <property type="entry name" value="RNASE_T2_2"/>
    <property type="match status" value="1"/>
</dbReference>
<accession>P83618</accession>
<accession>P83232</accession>
<accession>Q6RI81</accession>
<keyword id="KW-0903">Direct protein sequencing</keyword>
<keyword id="KW-1015">Disulfide bond</keyword>
<keyword id="KW-0732">Signal</keyword>
<keyword id="KW-0758">Storage protein</keyword>